<proteinExistence type="inferred from homology"/>
<name>RSH_BRUO2</name>
<evidence type="ECO:0000250" key="1"/>
<evidence type="ECO:0000255" key="2">
    <source>
        <dbReference type="PROSITE-ProRule" id="PRU01007"/>
    </source>
</evidence>
<evidence type="ECO:0000255" key="3">
    <source>
        <dbReference type="PROSITE-ProRule" id="PRU01175"/>
    </source>
</evidence>
<evidence type="ECO:0000255" key="4">
    <source>
        <dbReference type="PROSITE-ProRule" id="PRU01228"/>
    </source>
</evidence>
<evidence type="ECO:0000256" key="5">
    <source>
        <dbReference type="SAM" id="MobiDB-lite"/>
    </source>
</evidence>
<evidence type="ECO:0000305" key="6"/>
<dbReference type="EC" id="2.7.6.5"/>
<dbReference type="EMBL" id="CP000708">
    <property type="protein sequence ID" value="ABQ60728.1"/>
    <property type="molecule type" value="Genomic_DNA"/>
</dbReference>
<dbReference type="RefSeq" id="WP_004688165.1">
    <property type="nucleotide sequence ID" value="NC_009505.1"/>
</dbReference>
<dbReference type="SMR" id="A5VPI9"/>
<dbReference type="KEGG" id="bov:BOV_0645"/>
<dbReference type="HOGENOM" id="CLU_012300_3_0_5"/>
<dbReference type="PhylomeDB" id="A5VPI9"/>
<dbReference type="Proteomes" id="UP000006383">
    <property type="component" value="Chromosome I"/>
</dbReference>
<dbReference type="GO" id="GO:0005886">
    <property type="term" value="C:plasma membrane"/>
    <property type="evidence" value="ECO:0007669"/>
    <property type="project" value="TreeGrafter"/>
</dbReference>
<dbReference type="GO" id="GO:0005524">
    <property type="term" value="F:ATP binding"/>
    <property type="evidence" value="ECO:0007669"/>
    <property type="project" value="UniProtKB-KW"/>
</dbReference>
<dbReference type="GO" id="GO:0005525">
    <property type="term" value="F:GTP binding"/>
    <property type="evidence" value="ECO:0007669"/>
    <property type="project" value="UniProtKB-KW"/>
</dbReference>
<dbReference type="GO" id="GO:0008728">
    <property type="term" value="F:GTP diphosphokinase activity"/>
    <property type="evidence" value="ECO:0007669"/>
    <property type="project" value="UniProtKB-EC"/>
</dbReference>
<dbReference type="GO" id="GO:0008893">
    <property type="term" value="F:guanosine-3',5'-bis(diphosphate) 3'-diphosphatase activity"/>
    <property type="evidence" value="ECO:0007669"/>
    <property type="project" value="TreeGrafter"/>
</dbReference>
<dbReference type="GO" id="GO:0016301">
    <property type="term" value="F:kinase activity"/>
    <property type="evidence" value="ECO:0007669"/>
    <property type="project" value="UniProtKB-KW"/>
</dbReference>
<dbReference type="GO" id="GO:0015969">
    <property type="term" value="P:guanosine tetraphosphate metabolic process"/>
    <property type="evidence" value="ECO:0007669"/>
    <property type="project" value="InterPro"/>
</dbReference>
<dbReference type="GO" id="GO:0042594">
    <property type="term" value="P:response to starvation"/>
    <property type="evidence" value="ECO:0007669"/>
    <property type="project" value="TreeGrafter"/>
</dbReference>
<dbReference type="CDD" id="cd04876">
    <property type="entry name" value="ACT_RelA-SpoT"/>
    <property type="match status" value="1"/>
</dbReference>
<dbReference type="CDD" id="cd00077">
    <property type="entry name" value="HDc"/>
    <property type="match status" value="1"/>
</dbReference>
<dbReference type="CDD" id="cd05399">
    <property type="entry name" value="NT_Rel-Spo_like"/>
    <property type="match status" value="1"/>
</dbReference>
<dbReference type="CDD" id="cd01668">
    <property type="entry name" value="TGS_RSH"/>
    <property type="match status" value="1"/>
</dbReference>
<dbReference type="FunFam" id="3.10.20.30:FF:000002">
    <property type="entry name" value="GTP pyrophosphokinase (RelA/SpoT)"/>
    <property type="match status" value="1"/>
</dbReference>
<dbReference type="FunFam" id="1.10.3210.10:FF:000001">
    <property type="entry name" value="GTP pyrophosphokinase RelA"/>
    <property type="match status" value="1"/>
</dbReference>
<dbReference type="FunFam" id="3.30.460.10:FF:000001">
    <property type="entry name" value="GTP pyrophosphokinase RelA"/>
    <property type="match status" value="1"/>
</dbReference>
<dbReference type="Gene3D" id="3.10.20.30">
    <property type="match status" value="1"/>
</dbReference>
<dbReference type="Gene3D" id="3.30.70.260">
    <property type="match status" value="1"/>
</dbReference>
<dbReference type="Gene3D" id="3.30.460.10">
    <property type="entry name" value="Beta Polymerase, domain 2"/>
    <property type="match status" value="1"/>
</dbReference>
<dbReference type="Gene3D" id="1.10.3210.10">
    <property type="entry name" value="Hypothetical protein af1432"/>
    <property type="match status" value="1"/>
</dbReference>
<dbReference type="InterPro" id="IPR045865">
    <property type="entry name" value="ACT-like_dom_sf"/>
</dbReference>
<dbReference type="InterPro" id="IPR002912">
    <property type="entry name" value="ACT_dom"/>
</dbReference>
<dbReference type="InterPro" id="IPR012675">
    <property type="entry name" value="Beta-grasp_dom_sf"/>
</dbReference>
<dbReference type="InterPro" id="IPR003607">
    <property type="entry name" value="HD/PDEase_dom"/>
</dbReference>
<dbReference type="InterPro" id="IPR006674">
    <property type="entry name" value="HD_domain"/>
</dbReference>
<dbReference type="InterPro" id="IPR043519">
    <property type="entry name" value="NT_sf"/>
</dbReference>
<dbReference type="InterPro" id="IPR004811">
    <property type="entry name" value="RelA/Spo_fam"/>
</dbReference>
<dbReference type="InterPro" id="IPR045600">
    <property type="entry name" value="RelA/SpoT_AH_RIS"/>
</dbReference>
<dbReference type="InterPro" id="IPR007685">
    <property type="entry name" value="RelA_SpoT"/>
</dbReference>
<dbReference type="InterPro" id="IPR004095">
    <property type="entry name" value="TGS"/>
</dbReference>
<dbReference type="InterPro" id="IPR012676">
    <property type="entry name" value="TGS-like"/>
</dbReference>
<dbReference type="InterPro" id="IPR033655">
    <property type="entry name" value="TGS_RelA/SpoT"/>
</dbReference>
<dbReference type="NCBIfam" id="TIGR00691">
    <property type="entry name" value="spoT_relA"/>
    <property type="match status" value="1"/>
</dbReference>
<dbReference type="PANTHER" id="PTHR21262:SF36">
    <property type="entry name" value="BIFUNCTIONAL (P)PPGPP SYNTHASE_HYDROLASE SPOT"/>
    <property type="match status" value="1"/>
</dbReference>
<dbReference type="PANTHER" id="PTHR21262">
    <property type="entry name" value="GUANOSINE-3',5'-BIS DIPHOSPHATE 3'-PYROPHOSPHOHYDROLASE"/>
    <property type="match status" value="1"/>
</dbReference>
<dbReference type="Pfam" id="PF13291">
    <property type="entry name" value="ACT_4"/>
    <property type="match status" value="1"/>
</dbReference>
<dbReference type="Pfam" id="PF13328">
    <property type="entry name" value="HD_4"/>
    <property type="match status" value="1"/>
</dbReference>
<dbReference type="Pfam" id="PF19296">
    <property type="entry name" value="RelA_AH_RIS"/>
    <property type="match status" value="1"/>
</dbReference>
<dbReference type="Pfam" id="PF04607">
    <property type="entry name" value="RelA_SpoT"/>
    <property type="match status" value="1"/>
</dbReference>
<dbReference type="Pfam" id="PF02824">
    <property type="entry name" value="TGS"/>
    <property type="match status" value="1"/>
</dbReference>
<dbReference type="SMART" id="SM00471">
    <property type="entry name" value="HDc"/>
    <property type="match status" value="1"/>
</dbReference>
<dbReference type="SMART" id="SM00954">
    <property type="entry name" value="RelA_SpoT"/>
    <property type="match status" value="1"/>
</dbReference>
<dbReference type="SUPFAM" id="SSF55021">
    <property type="entry name" value="ACT-like"/>
    <property type="match status" value="1"/>
</dbReference>
<dbReference type="SUPFAM" id="SSF109604">
    <property type="entry name" value="HD-domain/PDEase-like"/>
    <property type="match status" value="1"/>
</dbReference>
<dbReference type="SUPFAM" id="SSF81301">
    <property type="entry name" value="Nucleotidyltransferase"/>
    <property type="match status" value="1"/>
</dbReference>
<dbReference type="SUPFAM" id="SSF81271">
    <property type="entry name" value="TGS-like"/>
    <property type="match status" value="1"/>
</dbReference>
<dbReference type="PROSITE" id="PS51671">
    <property type="entry name" value="ACT"/>
    <property type="match status" value="1"/>
</dbReference>
<dbReference type="PROSITE" id="PS51831">
    <property type="entry name" value="HD"/>
    <property type="match status" value="1"/>
</dbReference>
<dbReference type="PROSITE" id="PS51880">
    <property type="entry name" value="TGS"/>
    <property type="match status" value="1"/>
</dbReference>
<gene>
    <name type="primary">rsh</name>
    <name type="ordered locus">BOV_0645</name>
</gene>
<sequence length="750" mass="83914">MMRQYELVERVQRYKPDVNEALLNKAYVYAMQKHGSQKRASGDPYFSHPLEVAAILTDMHLDEATIAIALLHDTIEDTTATRQEIDQLFGPEIGKLVEGLTKLKKLDLVSKKAVQAENLRKLLLAISEDVRVLLVKLADRLHNMRTLGVMREDKRLRIAEETMDIYAPLAGRMGMQDMREELEELAFRYINPDAWRAVTDRLAELLEKNRGLLQKIETDLSEIFEKNGIKASVKSRQKKPWSVFRKMETKGLSFEQLSDIFGFRVMVDTVQDCYRALGLIHTTWSMVPGRFKDYISTPKQNDYRSIHTTIIGPSRQRIELQIRTREMDEIAEFGVAAHSIYKDRGSANNPHKISTETNAYAWLRQTIEQLSEGDNPEEFLEHTKLELFQDQVFCFTPKGRLIALPRGATPIDFAYAVHTDIGDSCVGAKVNGRIMPLMTELKNGDEVDIIRSKAQVPPAAWESLVATGKARAAIRRATRSAVRKQYSGLGMRILERAFERAGKPFSKDILKPGLPRLARKDVEDVLAAVGRGELPSTDVVKAVYPDYQDTRVTTQNNPAKAGEKGWFNIQNAAGMIFKVPEGGEGAAAKVDPAATTPKPGKRALPIRGTNPDLPVRFAPEGAVPGDRIVGILQPGAGITIYPIQSPALTAYDDQPERWIDVRWDIDDQMSERFPARISVSAINSPGSLAEIAQIAAANDANIHNLSMVRTAPDFTEMIIDVEVWDLKHLNRIISQLKESASVSSAKRVNG</sequence>
<protein>
    <recommendedName>
        <fullName>GTP pyrophosphokinase rsh</fullName>
        <ecNumber>2.7.6.5</ecNumber>
    </recommendedName>
    <alternativeName>
        <fullName>(p)ppGpp synthase</fullName>
    </alternativeName>
    <alternativeName>
        <fullName>ATP:GTP 3'-pyrophosphotransferase</fullName>
    </alternativeName>
</protein>
<reference key="1">
    <citation type="journal article" date="2009" name="PLoS ONE">
        <title>Genome degradation in Brucella ovis corresponds with narrowing of its host range and tissue tropism.</title>
        <authorList>
            <person name="Tsolis R.M."/>
            <person name="Seshadri R."/>
            <person name="Santos R.L."/>
            <person name="Sangari F.J."/>
            <person name="Lobo J.M."/>
            <person name="de Jong M.F."/>
            <person name="Ren Q."/>
            <person name="Myers G."/>
            <person name="Brinkac L.M."/>
            <person name="Nelson W.C."/>
            <person name="Deboy R.T."/>
            <person name="Angiuoli S."/>
            <person name="Khouri H."/>
            <person name="Dimitrov G."/>
            <person name="Robinson J.R."/>
            <person name="Mulligan S."/>
            <person name="Walker R.L."/>
            <person name="Elzer P.E."/>
            <person name="Hassan K.A."/>
            <person name="Paulsen I.T."/>
        </authorList>
    </citation>
    <scope>NUCLEOTIDE SEQUENCE [LARGE SCALE GENOMIC DNA]</scope>
    <source>
        <strain>ATCC 25840 / 63/290 / NCTC 10512</strain>
    </source>
</reference>
<keyword id="KW-0067">ATP-binding</keyword>
<keyword id="KW-0342">GTP-binding</keyword>
<keyword id="KW-0418">Kinase</keyword>
<keyword id="KW-0547">Nucleotide-binding</keyword>
<keyword id="KW-0808">Transferase</keyword>
<organism>
    <name type="scientific">Brucella ovis (strain ATCC 25840 / 63/290 / NCTC 10512)</name>
    <dbReference type="NCBI Taxonomy" id="444178"/>
    <lineage>
        <taxon>Bacteria</taxon>
        <taxon>Pseudomonadati</taxon>
        <taxon>Pseudomonadota</taxon>
        <taxon>Alphaproteobacteria</taxon>
        <taxon>Hyphomicrobiales</taxon>
        <taxon>Brucellaceae</taxon>
        <taxon>Brucella/Ochrobactrum group</taxon>
        <taxon>Brucella</taxon>
    </lineage>
</organism>
<feature type="chain" id="PRO_0000322564" description="GTP pyrophosphokinase rsh">
    <location>
        <begin position="1"/>
        <end position="750"/>
    </location>
</feature>
<feature type="domain" description="HD" evidence="3">
    <location>
        <begin position="45"/>
        <end position="144"/>
    </location>
</feature>
<feature type="domain" description="TGS" evidence="4">
    <location>
        <begin position="390"/>
        <end position="451"/>
    </location>
</feature>
<feature type="domain" description="ACT" evidence="2">
    <location>
        <begin position="676"/>
        <end position="750"/>
    </location>
</feature>
<feature type="region of interest" description="Disordered" evidence="5">
    <location>
        <begin position="587"/>
        <end position="613"/>
    </location>
</feature>
<accession>A5VPI9</accession>
<comment type="function">
    <text evidence="1">Functions as a (p)ppGpp synthase. In eubacteria ppGpp (guanosine 3'-diphosphate 5'-diphosphate) is a mediator of the stringent response that coordinates a variety of cellular activities in response to changes in nutritional abundance. Plays a role in adaptation of Brucella to its intracellular host environment (By similarity).</text>
</comment>
<comment type="catalytic activity">
    <reaction>
        <text>GTP + ATP = guanosine 3'-diphosphate 5'-triphosphate + AMP</text>
        <dbReference type="Rhea" id="RHEA:22088"/>
        <dbReference type="ChEBI" id="CHEBI:30616"/>
        <dbReference type="ChEBI" id="CHEBI:37565"/>
        <dbReference type="ChEBI" id="CHEBI:142410"/>
        <dbReference type="ChEBI" id="CHEBI:456215"/>
        <dbReference type="EC" id="2.7.6.5"/>
    </reaction>
</comment>
<comment type="similarity">
    <text evidence="6">Belongs to the RelA/SpoT family.</text>
</comment>